<comment type="function">
    <text evidence="1">F(1)F(0) ATP synthase produces ATP from ADP in the presence of a proton or sodium gradient. F-type ATPases consist of two structural domains, F(1) containing the extramembraneous catalytic core and F(0) containing the membrane proton channel, linked together by a central stalk and a peripheral stalk. During catalysis, ATP synthesis in the catalytic domain of F(1) is coupled via a rotary mechanism of the central stalk subunits to proton translocation.</text>
</comment>
<comment type="function">
    <text evidence="1">Component of the F(0) channel, it forms part of the peripheral stalk, linking F(1) to F(0).</text>
</comment>
<comment type="subunit">
    <text evidence="1">F-type ATPases have 2 components, F(1) - the catalytic core - and F(0) - the membrane proton channel. F(1) has five subunits: alpha(3), beta(3), gamma(1), delta(1), epsilon(1). F(0) has four main subunits: a(1), b(1), b'(1) and c(10-14). The alpha and beta chains form an alternating ring which encloses part of the gamma chain. F(1) is attached to F(0) by a central stalk formed by the gamma and epsilon chains, while a peripheral stalk is formed by the delta, b and b' chains.</text>
</comment>
<comment type="subcellular location">
    <subcellularLocation>
        <location evidence="1">Cell inner membrane</location>
        <topology evidence="1">Single-pass membrane protein</topology>
    </subcellularLocation>
</comment>
<comment type="similarity">
    <text evidence="1">Belongs to the ATPase B chain family.</text>
</comment>
<keyword id="KW-0066">ATP synthesis</keyword>
<keyword id="KW-0997">Cell inner membrane</keyword>
<keyword id="KW-1003">Cell membrane</keyword>
<keyword id="KW-0138">CF(0)</keyword>
<keyword id="KW-0375">Hydrogen ion transport</keyword>
<keyword id="KW-0406">Ion transport</keyword>
<keyword id="KW-0472">Membrane</keyword>
<keyword id="KW-1185">Reference proteome</keyword>
<keyword id="KW-0812">Transmembrane</keyword>
<keyword id="KW-1133">Transmembrane helix</keyword>
<keyword id="KW-0813">Transport</keyword>
<organism>
    <name type="scientific">Gloeobacter violaceus (strain ATCC 29082 / PCC 7421)</name>
    <dbReference type="NCBI Taxonomy" id="251221"/>
    <lineage>
        <taxon>Bacteria</taxon>
        <taxon>Bacillati</taxon>
        <taxon>Cyanobacteriota</taxon>
        <taxon>Cyanophyceae</taxon>
        <taxon>Gloeobacterales</taxon>
        <taxon>Gloeobacteraceae</taxon>
        <taxon>Gloeobacter</taxon>
    </lineage>
</organism>
<proteinExistence type="inferred from homology"/>
<sequence length="175" mass="19911">MDWMPLVLAAEEAESRGFSLNLNLLETNIINIAIVFGLLIFLARGYFGRVLGERKSEIENGIREVENRGRQAEQELATARQNLSQAQVQAQQILASARTNAERVRAQVLDQAQIDIARVRETVDQDLRNEQQRILTQVRLKVVGDALARLRERLPGELDEATQRRLLDRSIQLLD</sequence>
<evidence type="ECO:0000255" key="1">
    <source>
        <dbReference type="HAMAP-Rule" id="MF_01398"/>
    </source>
</evidence>
<protein>
    <recommendedName>
        <fullName evidence="1">ATP synthase subunit b</fullName>
    </recommendedName>
    <alternativeName>
        <fullName evidence="1">ATP synthase F(0) sector subunit b</fullName>
    </alternativeName>
    <alternativeName>
        <fullName evidence="1">ATPase subunit I</fullName>
    </alternativeName>
    <alternativeName>
        <fullName evidence="1">F-type ATPase subunit b</fullName>
        <shortName evidence="1">F-ATPase subunit b</shortName>
    </alternativeName>
</protein>
<gene>
    <name evidence="1" type="primary">atpF</name>
    <name type="ordered locus">gll2907</name>
</gene>
<accession>Q7NCS1</accession>
<dbReference type="EMBL" id="BA000045">
    <property type="protein sequence ID" value="BAC90848.1"/>
    <property type="molecule type" value="Genomic_DNA"/>
</dbReference>
<dbReference type="RefSeq" id="NP_925853.1">
    <property type="nucleotide sequence ID" value="NC_005125.1"/>
</dbReference>
<dbReference type="RefSeq" id="WP_011142901.1">
    <property type="nucleotide sequence ID" value="NC_005125.1"/>
</dbReference>
<dbReference type="SMR" id="Q7NCS1"/>
<dbReference type="FunCoup" id="Q7NCS1">
    <property type="interactions" value="40"/>
</dbReference>
<dbReference type="STRING" id="251221.gene:10760411"/>
<dbReference type="EnsemblBacteria" id="BAC90848">
    <property type="protein sequence ID" value="BAC90848"/>
    <property type="gene ID" value="BAC90848"/>
</dbReference>
<dbReference type="KEGG" id="gvi:gll2907"/>
<dbReference type="eggNOG" id="COG0711">
    <property type="taxonomic scope" value="Bacteria"/>
</dbReference>
<dbReference type="HOGENOM" id="CLU_079215_8_1_3"/>
<dbReference type="InParanoid" id="Q7NCS1"/>
<dbReference type="OrthoDB" id="461217at2"/>
<dbReference type="PhylomeDB" id="Q7NCS1"/>
<dbReference type="Proteomes" id="UP000000557">
    <property type="component" value="Chromosome"/>
</dbReference>
<dbReference type="GO" id="GO:0005886">
    <property type="term" value="C:plasma membrane"/>
    <property type="evidence" value="ECO:0007669"/>
    <property type="project" value="UniProtKB-SubCell"/>
</dbReference>
<dbReference type="GO" id="GO:0045259">
    <property type="term" value="C:proton-transporting ATP synthase complex"/>
    <property type="evidence" value="ECO:0007669"/>
    <property type="project" value="UniProtKB-KW"/>
</dbReference>
<dbReference type="GO" id="GO:0046933">
    <property type="term" value="F:proton-transporting ATP synthase activity, rotational mechanism"/>
    <property type="evidence" value="ECO:0007669"/>
    <property type="project" value="UniProtKB-UniRule"/>
</dbReference>
<dbReference type="CDD" id="cd06503">
    <property type="entry name" value="ATP-synt_Fo_b"/>
    <property type="match status" value="1"/>
</dbReference>
<dbReference type="HAMAP" id="MF_01398">
    <property type="entry name" value="ATP_synth_b_bprime"/>
    <property type="match status" value="1"/>
</dbReference>
<dbReference type="InterPro" id="IPR028987">
    <property type="entry name" value="ATP_synth_B-like_membr_sf"/>
</dbReference>
<dbReference type="InterPro" id="IPR002146">
    <property type="entry name" value="ATP_synth_b/b'su_bac/chlpt"/>
</dbReference>
<dbReference type="NCBIfam" id="NF005606">
    <property type="entry name" value="PRK07352.1"/>
    <property type="match status" value="1"/>
</dbReference>
<dbReference type="PANTHER" id="PTHR34264">
    <property type="entry name" value="ATP SYNTHASE SUBUNIT B, CHLOROPLASTIC"/>
    <property type="match status" value="1"/>
</dbReference>
<dbReference type="PANTHER" id="PTHR34264:SF3">
    <property type="entry name" value="ATP SYNTHASE SUBUNIT B, CHLOROPLASTIC"/>
    <property type="match status" value="1"/>
</dbReference>
<dbReference type="Pfam" id="PF00430">
    <property type="entry name" value="ATP-synt_B"/>
    <property type="match status" value="1"/>
</dbReference>
<dbReference type="SUPFAM" id="SSF81573">
    <property type="entry name" value="F1F0 ATP synthase subunit B, membrane domain"/>
    <property type="match status" value="1"/>
</dbReference>
<name>ATPF_GLOVI</name>
<reference key="1">
    <citation type="journal article" date="2003" name="DNA Res.">
        <title>Complete genome structure of Gloeobacter violaceus PCC 7421, a cyanobacterium that lacks thylakoids.</title>
        <authorList>
            <person name="Nakamura Y."/>
            <person name="Kaneko T."/>
            <person name="Sato S."/>
            <person name="Mimuro M."/>
            <person name="Miyashita H."/>
            <person name="Tsuchiya T."/>
            <person name="Sasamoto S."/>
            <person name="Watanabe A."/>
            <person name="Kawashima K."/>
            <person name="Kishida Y."/>
            <person name="Kiyokawa C."/>
            <person name="Kohara M."/>
            <person name="Matsumoto M."/>
            <person name="Matsuno A."/>
            <person name="Nakazaki N."/>
            <person name="Shimpo S."/>
            <person name="Takeuchi C."/>
            <person name="Yamada M."/>
            <person name="Tabata S."/>
        </authorList>
    </citation>
    <scope>NUCLEOTIDE SEQUENCE [LARGE SCALE GENOMIC DNA]</scope>
    <source>
        <strain>ATCC 29082 / PCC 7421</strain>
    </source>
</reference>
<feature type="chain" id="PRO_0000368504" description="ATP synthase subunit b">
    <location>
        <begin position="1"/>
        <end position="175"/>
    </location>
</feature>
<feature type="transmembrane region" description="Helical" evidence="1">
    <location>
        <begin position="22"/>
        <end position="42"/>
    </location>
</feature>